<accession>B7MTZ4</accession>
<reference key="1">
    <citation type="journal article" date="2009" name="PLoS Genet.">
        <title>Organised genome dynamics in the Escherichia coli species results in highly diverse adaptive paths.</title>
        <authorList>
            <person name="Touchon M."/>
            <person name="Hoede C."/>
            <person name="Tenaillon O."/>
            <person name="Barbe V."/>
            <person name="Baeriswyl S."/>
            <person name="Bidet P."/>
            <person name="Bingen E."/>
            <person name="Bonacorsi S."/>
            <person name="Bouchier C."/>
            <person name="Bouvet O."/>
            <person name="Calteau A."/>
            <person name="Chiapello H."/>
            <person name="Clermont O."/>
            <person name="Cruveiller S."/>
            <person name="Danchin A."/>
            <person name="Diard M."/>
            <person name="Dossat C."/>
            <person name="Karoui M.E."/>
            <person name="Frapy E."/>
            <person name="Garry L."/>
            <person name="Ghigo J.M."/>
            <person name="Gilles A.M."/>
            <person name="Johnson J."/>
            <person name="Le Bouguenec C."/>
            <person name="Lescat M."/>
            <person name="Mangenot S."/>
            <person name="Martinez-Jehanne V."/>
            <person name="Matic I."/>
            <person name="Nassif X."/>
            <person name="Oztas S."/>
            <person name="Petit M.A."/>
            <person name="Pichon C."/>
            <person name="Rouy Z."/>
            <person name="Ruf C.S."/>
            <person name="Schneider D."/>
            <person name="Tourret J."/>
            <person name="Vacherie B."/>
            <person name="Vallenet D."/>
            <person name="Medigue C."/>
            <person name="Rocha E.P.C."/>
            <person name="Denamur E."/>
        </authorList>
    </citation>
    <scope>NUCLEOTIDE SEQUENCE [LARGE SCALE GENOMIC DNA]</scope>
    <source>
        <strain>ED1a</strain>
    </source>
</reference>
<sequence length="418" mass="46294">MTLLALGINHKTAPVSLRERVSFSPDKLDQALDSLLAQPMVQGGVVLSTCNRTELYLSVEERDDLQEALIRWLCDYHNLNEDDLRNSLYWHQDNDAVSHLMRVASGLDSLVLGEPQILGQVKKAFADSQKGHMKASELERMFQKSFSVAKRVRTETDIGASAVSVAFAACTLARQIFESLSTVTVLLVGAGETIELVARHLREHKVQKMIIANRTRERAQILADEVGAEVIALSDIDERLREADIIISSTASPLPIIGKGMVERALKSRRNQPMLLVDIAVPRDVEPEVGKLANAYLYSVDDLQSIISHNLAQRKAAAVEAETIVAQEASEFMAWLRAQSASETIRDYRSQAEQVRDELTAKALAALEQGGDAQTIMQDLAWKLTNRLIHAPTKSLQQAARDGDNERLNILRDSLGLE</sequence>
<evidence type="ECO:0000255" key="1">
    <source>
        <dbReference type="HAMAP-Rule" id="MF_00087"/>
    </source>
</evidence>
<proteinExistence type="inferred from homology"/>
<name>HEM1_ECO81</name>
<dbReference type="EC" id="1.2.1.70" evidence="1"/>
<dbReference type="EMBL" id="CU928162">
    <property type="protein sequence ID" value="CAR07558.1"/>
    <property type="molecule type" value="Genomic_DNA"/>
</dbReference>
<dbReference type="RefSeq" id="WP_000173201.1">
    <property type="nucleotide sequence ID" value="NC_011745.1"/>
</dbReference>
<dbReference type="SMR" id="B7MTZ4"/>
<dbReference type="KEGG" id="ecq:ECED1_1358"/>
<dbReference type="HOGENOM" id="CLU_035113_2_2_6"/>
<dbReference type="UniPathway" id="UPA00251">
    <property type="reaction ID" value="UER00316"/>
</dbReference>
<dbReference type="Proteomes" id="UP000000748">
    <property type="component" value="Chromosome"/>
</dbReference>
<dbReference type="GO" id="GO:0008883">
    <property type="term" value="F:glutamyl-tRNA reductase activity"/>
    <property type="evidence" value="ECO:0007669"/>
    <property type="project" value="UniProtKB-UniRule"/>
</dbReference>
<dbReference type="GO" id="GO:0050661">
    <property type="term" value="F:NADP binding"/>
    <property type="evidence" value="ECO:0007669"/>
    <property type="project" value="InterPro"/>
</dbReference>
<dbReference type="GO" id="GO:0019353">
    <property type="term" value="P:protoporphyrinogen IX biosynthetic process from glutamate"/>
    <property type="evidence" value="ECO:0007669"/>
    <property type="project" value="TreeGrafter"/>
</dbReference>
<dbReference type="CDD" id="cd05213">
    <property type="entry name" value="NAD_bind_Glutamyl_tRNA_reduct"/>
    <property type="match status" value="1"/>
</dbReference>
<dbReference type="FunFam" id="3.30.460.30:FF:000001">
    <property type="entry name" value="Glutamyl-tRNA reductase"/>
    <property type="match status" value="1"/>
</dbReference>
<dbReference type="FunFam" id="3.40.50.720:FF:000031">
    <property type="entry name" value="Glutamyl-tRNA reductase"/>
    <property type="match status" value="1"/>
</dbReference>
<dbReference type="Gene3D" id="3.30.460.30">
    <property type="entry name" value="Glutamyl-tRNA reductase, N-terminal domain"/>
    <property type="match status" value="1"/>
</dbReference>
<dbReference type="Gene3D" id="3.40.50.720">
    <property type="entry name" value="NAD(P)-binding Rossmann-like Domain"/>
    <property type="match status" value="1"/>
</dbReference>
<dbReference type="HAMAP" id="MF_00087">
    <property type="entry name" value="Glu_tRNA_reductase"/>
    <property type="match status" value="1"/>
</dbReference>
<dbReference type="InterPro" id="IPR000343">
    <property type="entry name" value="4pyrrol_synth_GluRdtase"/>
</dbReference>
<dbReference type="InterPro" id="IPR015896">
    <property type="entry name" value="4pyrrol_synth_GluRdtase_dimer"/>
</dbReference>
<dbReference type="InterPro" id="IPR015895">
    <property type="entry name" value="4pyrrol_synth_GluRdtase_N"/>
</dbReference>
<dbReference type="InterPro" id="IPR018214">
    <property type="entry name" value="GluRdtase_CS"/>
</dbReference>
<dbReference type="InterPro" id="IPR036453">
    <property type="entry name" value="GluRdtase_dimer_dom_sf"/>
</dbReference>
<dbReference type="InterPro" id="IPR036343">
    <property type="entry name" value="GluRdtase_N_sf"/>
</dbReference>
<dbReference type="InterPro" id="IPR036291">
    <property type="entry name" value="NAD(P)-bd_dom_sf"/>
</dbReference>
<dbReference type="InterPro" id="IPR006151">
    <property type="entry name" value="Shikm_DH/Glu-tRNA_Rdtase"/>
</dbReference>
<dbReference type="NCBIfam" id="TIGR01035">
    <property type="entry name" value="hemA"/>
    <property type="match status" value="1"/>
</dbReference>
<dbReference type="PANTHER" id="PTHR43013">
    <property type="entry name" value="GLUTAMYL-TRNA REDUCTASE"/>
    <property type="match status" value="1"/>
</dbReference>
<dbReference type="PANTHER" id="PTHR43013:SF1">
    <property type="entry name" value="GLUTAMYL-TRNA REDUCTASE"/>
    <property type="match status" value="1"/>
</dbReference>
<dbReference type="Pfam" id="PF00745">
    <property type="entry name" value="GlutR_dimer"/>
    <property type="match status" value="1"/>
</dbReference>
<dbReference type="Pfam" id="PF05201">
    <property type="entry name" value="GlutR_N"/>
    <property type="match status" value="1"/>
</dbReference>
<dbReference type="Pfam" id="PF01488">
    <property type="entry name" value="Shikimate_DH"/>
    <property type="match status" value="1"/>
</dbReference>
<dbReference type="PIRSF" id="PIRSF000445">
    <property type="entry name" value="4pyrrol_synth_GluRdtase"/>
    <property type="match status" value="1"/>
</dbReference>
<dbReference type="SUPFAM" id="SSF69742">
    <property type="entry name" value="Glutamyl tRNA-reductase catalytic, N-terminal domain"/>
    <property type="match status" value="1"/>
</dbReference>
<dbReference type="SUPFAM" id="SSF69075">
    <property type="entry name" value="Glutamyl tRNA-reductase dimerization domain"/>
    <property type="match status" value="1"/>
</dbReference>
<dbReference type="SUPFAM" id="SSF51735">
    <property type="entry name" value="NAD(P)-binding Rossmann-fold domains"/>
    <property type="match status" value="1"/>
</dbReference>
<dbReference type="PROSITE" id="PS00747">
    <property type="entry name" value="GLUTR"/>
    <property type="match status" value="1"/>
</dbReference>
<keyword id="KW-0521">NADP</keyword>
<keyword id="KW-0560">Oxidoreductase</keyword>
<keyword id="KW-0627">Porphyrin biosynthesis</keyword>
<comment type="function">
    <text evidence="1">Catalyzes the NADPH-dependent reduction of glutamyl-tRNA(Glu) to glutamate 1-semialdehyde (GSA).</text>
</comment>
<comment type="catalytic activity">
    <reaction evidence="1">
        <text>(S)-4-amino-5-oxopentanoate + tRNA(Glu) + NADP(+) = L-glutamyl-tRNA(Glu) + NADPH + H(+)</text>
        <dbReference type="Rhea" id="RHEA:12344"/>
        <dbReference type="Rhea" id="RHEA-COMP:9663"/>
        <dbReference type="Rhea" id="RHEA-COMP:9680"/>
        <dbReference type="ChEBI" id="CHEBI:15378"/>
        <dbReference type="ChEBI" id="CHEBI:57501"/>
        <dbReference type="ChEBI" id="CHEBI:57783"/>
        <dbReference type="ChEBI" id="CHEBI:58349"/>
        <dbReference type="ChEBI" id="CHEBI:78442"/>
        <dbReference type="ChEBI" id="CHEBI:78520"/>
        <dbReference type="EC" id="1.2.1.70"/>
    </reaction>
</comment>
<comment type="pathway">
    <text evidence="1">Porphyrin-containing compound metabolism; protoporphyrin-IX biosynthesis; 5-aminolevulinate from L-glutamyl-tRNA(Glu): step 1/2.</text>
</comment>
<comment type="subunit">
    <text evidence="1">Homodimer.</text>
</comment>
<comment type="domain">
    <text evidence="1">Possesses an unusual extended V-shaped dimeric structure with each monomer consisting of three distinct domains arranged along a curved 'spinal' alpha-helix. The N-terminal catalytic domain specifically recognizes the glutamate moiety of the substrate. The second domain is the NADPH-binding domain, and the third C-terminal domain is responsible for dimerization.</text>
</comment>
<comment type="miscellaneous">
    <text evidence="1">During catalysis, the active site Cys acts as a nucleophile attacking the alpha-carbonyl group of tRNA-bound glutamate with the formation of a thioester intermediate between enzyme and glutamate, and the concomitant release of tRNA(Glu). The thioester intermediate is finally reduced by direct hydride transfer from NADPH, to form the product GSA.</text>
</comment>
<comment type="similarity">
    <text evidence="1">Belongs to the glutamyl-tRNA reductase family.</text>
</comment>
<protein>
    <recommendedName>
        <fullName evidence="1">Glutamyl-tRNA reductase</fullName>
        <shortName evidence="1">GluTR</shortName>
        <ecNumber evidence="1">1.2.1.70</ecNumber>
    </recommendedName>
</protein>
<feature type="chain" id="PRO_1000190528" description="Glutamyl-tRNA reductase">
    <location>
        <begin position="1"/>
        <end position="418"/>
    </location>
</feature>
<feature type="active site" description="Nucleophile" evidence="1">
    <location>
        <position position="50"/>
    </location>
</feature>
<feature type="binding site" evidence="1">
    <location>
        <begin position="49"/>
        <end position="52"/>
    </location>
    <ligand>
        <name>substrate</name>
    </ligand>
</feature>
<feature type="binding site" evidence="1">
    <location>
        <position position="109"/>
    </location>
    <ligand>
        <name>substrate</name>
    </ligand>
</feature>
<feature type="binding site" evidence="1">
    <location>
        <begin position="114"/>
        <end position="116"/>
    </location>
    <ligand>
        <name>substrate</name>
    </ligand>
</feature>
<feature type="binding site" evidence="1">
    <location>
        <position position="120"/>
    </location>
    <ligand>
        <name>substrate</name>
    </ligand>
</feature>
<feature type="binding site" evidence="1">
    <location>
        <begin position="189"/>
        <end position="194"/>
    </location>
    <ligand>
        <name>NADP(+)</name>
        <dbReference type="ChEBI" id="CHEBI:58349"/>
    </ligand>
</feature>
<feature type="site" description="Important for activity" evidence="1">
    <location>
        <position position="99"/>
    </location>
</feature>
<organism>
    <name type="scientific">Escherichia coli O81 (strain ED1a)</name>
    <dbReference type="NCBI Taxonomy" id="585397"/>
    <lineage>
        <taxon>Bacteria</taxon>
        <taxon>Pseudomonadati</taxon>
        <taxon>Pseudomonadota</taxon>
        <taxon>Gammaproteobacteria</taxon>
        <taxon>Enterobacterales</taxon>
        <taxon>Enterobacteriaceae</taxon>
        <taxon>Escherichia</taxon>
    </lineage>
</organism>
<gene>
    <name evidence="1" type="primary">hemA</name>
    <name type="ordered locus">ECED1_1358</name>
</gene>